<name>GATC_RUEPO</name>
<evidence type="ECO:0000255" key="1">
    <source>
        <dbReference type="HAMAP-Rule" id="MF_00122"/>
    </source>
</evidence>
<sequence>MSIDQSTAAKVAKLARIKVEQDALPALAAEFNTILGFIEQLNEVNVDGVEPMVSVTPMRLKRRTDGVSDGNQQAKVLSNAPDAREGFFAVPKVVE</sequence>
<protein>
    <recommendedName>
        <fullName evidence="1">Aspartyl/glutamyl-tRNA(Asn/Gln) amidotransferase subunit C</fullName>
        <shortName evidence="1">Asp/Glu-ADT subunit C</shortName>
        <ecNumber evidence="1">6.3.5.-</ecNumber>
    </recommendedName>
</protein>
<reference key="1">
    <citation type="journal article" date="2004" name="Nature">
        <title>Genome sequence of Silicibacter pomeroyi reveals adaptations to the marine environment.</title>
        <authorList>
            <person name="Moran M.A."/>
            <person name="Buchan A."/>
            <person name="Gonzalez J.M."/>
            <person name="Heidelberg J.F."/>
            <person name="Whitman W.B."/>
            <person name="Kiene R.P."/>
            <person name="Henriksen J.R."/>
            <person name="King G.M."/>
            <person name="Belas R."/>
            <person name="Fuqua C."/>
            <person name="Brinkac L.M."/>
            <person name="Lewis M."/>
            <person name="Johri S."/>
            <person name="Weaver B."/>
            <person name="Pai G."/>
            <person name="Eisen J.A."/>
            <person name="Rahe E."/>
            <person name="Sheldon W.M."/>
            <person name="Ye W."/>
            <person name="Miller T.R."/>
            <person name="Carlton J."/>
            <person name="Rasko D.A."/>
            <person name="Paulsen I.T."/>
            <person name="Ren Q."/>
            <person name="Daugherty S.C."/>
            <person name="DeBoy R.T."/>
            <person name="Dodson R.J."/>
            <person name="Durkin A.S."/>
            <person name="Madupu R."/>
            <person name="Nelson W.C."/>
            <person name="Sullivan S.A."/>
            <person name="Rosovitz M.J."/>
            <person name="Haft D.H."/>
            <person name="Selengut J."/>
            <person name="Ward N."/>
        </authorList>
    </citation>
    <scope>NUCLEOTIDE SEQUENCE [LARGE SCALE GENOMIC DNA]</scope>
    <source>
        <strain>ATCC 700808 / DSM 15171 / DSS-3</strain>
    </source>
</reference>
<reference key="2">
    <citation type="journal article" date="2014" name="Stand. Genomic Sci.">
        <title>An updated genome annotation for the model marine bacterium Ruegeria pomeroyi DSS-3.</title>
        <authorList>
            <person name="Rivers A.R."/>
            <person name="Smith C.B."/>
            <person name="Moran M.A."/>
        </authorList>
    </citation>
    <scope>GENOME REANNOTATION</scope>
    <source>
        <strain>ATCC 700808 / DSM 15171 / DSS-3</strain>
    </source>
</reference>
<comment type="function">
    <text evidence="1">Allows the formation of correctly charged Asn-tRNA(Asn) or Gln-tRNA(Gln) through the transamidation of misacylated Asp-tRNA(Asn) or Glu-tRNA(Gln) in organisms which lack either or both of asparaginyl-tRNA or glutaminyl-tRNA synthetases. The reaction takes place in the presence of glutamine and ATP through an activated phospho-Asp-tRNA(Asn) or phospho-Glu-tRNA(Gln).</text>
</comment>
<comment type="catalytic activity">
    <reaction evidence="1">
        <text>L-glutamyl-tRNA(Gln) + L-glutamine + ATP + H2O = L-glutaminyl-tRNA(Gln) + L-glutamate + ADP + phosphate + H(+)</text>
        <dbReference type="Rhea" id="RHEA:17521"/>
        <dbReference type="Rhea" id="RHEA-COMP:9681"/>
        <dbReference type="Rhea" id="RHEA-COMP:9684"/>
        <dbReference type="ChEBI" id="CHEBI:15377"/>
        <dbReference type="ChEBI" id="CHEBI:15378"/>
        <dbReference type="ChEBI" id="CHEBI:29985"/>
        <dbReference type="ChEBI" id="CHEBI:30616"/>
        <dbReference type="ChEBI" id="CHEBI:43474"/>
        <dbReference type="ChEBI" id="CHEBI:58359"/>
        <dbReference type="ChEBI" id="CHEBI:78520"/>
        <dbReference type="ChEBI" id="CHEBI:78521"/>
        <dbReference type="ChEBI" id="CHEBI:456216"/>
    </reaction>
</comment>
<comment type="catalytic activity">
    <reaction evidence="1">
        <text>L-aspartyl-tRNA(Asn) + L-glutamine + ATP + H2O = L-asparaginyl-tRNA(Asn) + L-glutamate + ADP + phosphate + 2 H(+)</text>
        <dbReference type="Rhea" id="RHEA:14513"/>
        <dbReference type="Rhea" id="RHEA-COMP:9674"/>
        <dbReference type="Rhea" id="RHEA-COMP:9677"/>
        <dbReference type="ChEBI" id="CHEBI:15377"/>
        <dbReference type="ChEBI" id="CHEBI:15378"/>
        <dbReference type="ChEBI" id="CHEBI:29985"/>
        <dbReference type="ChEBI" id="CHEBI:30616"/>
        <dbReference type="ChEBI" id="CHEBI:43474"/>
        <dbReference type="ChEBI" id="CHEBI:58359"/>
        <dbReference type="ChEBI" id="CHEBI:78515"/>
        <dbReference type="ChEBI" id="CHEBI:78516"/>
        <dbReference type="ChEBI" id="CHEBI:456216"/>
    </reaction>
</comment>
<comment type="subunit">
    <text evidence="1">Heterotrimer of A, B and C subunits.</text>
</comment>
<comment type="similarity">
    <text evidence="1">Belongs to the GatC family.</text>
</comment>
<accession>Q5LP79</accession>
<proteinExistence type="inferred from homology"/>
<feature type="chain" id="PRO_1000016208" description="Aspartyl/glutamyl-tRNA(Asn/Gln) amidotransferase subunit C">
    <location>
        <begin position="1"/>
        <end position="95"/>
    </location>
</feature>
<organism>
    <name type="scientific">Ruegeria pomeroyi (strain ATCC 700808 / DSM 15171 / DSS-3)</name>
    <name type="common">Silicibacter pomeroyi</name>
    <dbReference type="NCBI Taxonomy" id="246200"/>
    <lineage>
        <taxon>Bacteria</taxon>
        <taxon>Pseudomonadati</taxon>
        <taxon>Pseudomonadota</taxon>
        <taxon>Alphaproteobacteria</taxon>
        <taxon>Rhodobacterales</taxon>
        <taxon>Roseobacteraceae</taxon>
        <taxon>Ruegeria</taxon>
    </lineage>
</organism>
<keyword id="KW-0067">ATP-binding</keyword>
<keyword id="KW-0436">Ligase</keyword>
<keyword id="KW-0547">Nucleotide-binding</keyword>
<keyword id="KW-0648">Protein biosynthesis</keyword>
<keyword id="KW-1185">Reference proteome</keyword>
<gene>
    <name evidence="1" type="primary">gatC</name>
    <name type="ordered locus">SPO2970</name>
</gene>
<dbReference type="EC" id="6.3.5.-" evidence="1"/>
<dbReference type="EMBL" id="CP000031">
    <property type="protein sequence ID" value="AAV96209.1"/>
    <property type="molecule type" value="Genomic_DNA"/>
</dbReference>
<dbReference type="RefSeq" id="WP_011048667.1">
    <property type="nucleotide sequence ID" value="NC_003911.12"/>
</dbReference>
<dbReference type="SMR" id="Q5LP79"/>
<dbReference type="STRING" id="246200.SPO2970"/>
<dbReference type="PaxDb" id="246200-SPO2970"/>
<dbReference type="KEGG" id="sil:SPO2970"/>
<dbReference type="eggNOG" id="COG0721">
    <property type="taxonomic scope" value="Bacteria"/>
</dbReference>
<dbReference type="HOGENOM" id="CLU_105899_2_0_5"/>
<dbReference type="OrthoDB" id="9794326at2"/>
<dbReference type="Proteomes" id="UP000001023">
    <property type="component" value="Chromosome"/>
</dbReference>
<dbReference type="GO" id="GO:0050566">
    <property type="term" value="F:asparaginyl-tRNA synthase (glutamine-hydrolyzing) activity"/>
    <property type="evidence" value="ECO:0007669"/>
    <property type="project" value="RHEA"/>
</dbReference>
<dbReference type="GO" id="GO:0005524">
    <property type="term" value="F:ATP binding"/>
    <property type="evidence" value="ECO:0007669"/>
    <property type="project" value="UniProtKB-KW"/>
</dbReference>
<dbReference type="GO" id="GO:0050567">
    <property type="term" value="F:glutaminyl-tRNA synthase (glutamine-hydrolyzing) activity"/>
    <property type="evidence" value="ECO:0007669"/>
    <property type="project" value="UniProtKB-UniRule"/>
</dbReference>
<dbReference type="GO" id="GO:0070681">
    <property type="term" value="P:glutaminyl-tRNAGln biosynthesis via transamidation"/>
    <property type="evidence" value="ECO:0007669"/>
    <property type="project" value="TreeGrafter"/>
</dbReference>
<dbReference type="GO" id="GO:0006450">
    <property type="term" value="P:regulation of translational fidelity"/>
    <property type="evidence" value="ECO:0007669"/>
    <property type="project" value="InterPro"/>
</dbReference>
<dbReference type="GO" id="GO:0006412">
    <property type="term" value="P:translation"/>
    <property type="evidence" value="ECO:0007669"/>
    <property type="project" value="UniProtKB-UniRule"/>
</dbReference>
<dbReference type="Gene3D" id="1.10.20.60">
    <property type="entry name" value="Glu-tRNAGln amidotransferase C subunit, N-terminal domain"/>
    <property type="match status" value="1"/>
</dbReference>
<dbReference type="HAMAP" id="MF_00122">
    <property type="entry name" value="GatC"/>
    <property type="match status" value="1"/>
</dbReference>
<dbReference type="InterPro" id="IPR036113">
    <property type="entry name" value="Asp/Glu-ADT_sf_sub_c"/>
</dbReference>
<dbReference type="InterPro" id="IPR003837">
    <property type="entry name" value="GatC"/>
</dbReference>
<dbReference type="NCBIfam" id="TIGR00135">
    <property type="entry name" value="gatC"/>
    <property type="match status" value="1"/>
</dbReference>
<dbReference type="PANTHER" id="PTHR15004">
    <property type="entry name" value="GLUTAMYL-TRNA(GLN) AMIDOTRANSFERASE SUBUNIT C, MITOCHONDRIAL"/>
    <property type="match status" value="1"/>
</dbReference>
<dbReference type="PANTHER" id="PTHR15004:SF0">
    <property type="entry name" value="GLUTAMYL-TRNA(GLN) AMIDOTRANSFERASE SUBUNIT C, MITOCHONDRIAL"/>
    <property type="match status" value="1"/>
</dbReference>
<dbReference type="Pfam" id="PF02686">
    <property type="entry name" value="GatC"/>
    <property type="match status" value="1"/>
</dbReference>
<dbReference type="SUPFAM" id="SSF141000">
    <property type="entry name" value="Glu-tRNAGln amidotransferase C subunit"/>
    <property type="match status" value="1"/>
</dbReference>